<reference key="1">
    <citation type="submission" date="2006-02" db="EMBL/GenBank/DDBJ databases">
        <title>Complete sequence of chromosome of Jannaschia sp. CCS1.</title>
        <authorList>
            <consortium name="US DOE Joint Genome Institute"/>
            <person name="Copeland A."/>
            <person name="Lucas S."/>
            <person name="Lapidus A."/>
            <person name="Barry K."/>
            <person name="Detter J.C."/>
            <person name="Glavina del Rio T."/>
            <person name="Hammon N."/>
            <person name="Israni S."/>
            <person name="Pitluck S."/>
            <person name="Brettin T."/>
            <person name="Bruce D."/>
            <person name="Han C."/>
            <person name="Tapia R."/>
            <person name="Gilna P."/>
            <person name="Chertkov O."/>
            <person name="Saunders E."/>
            <person name="Schmutz J."/>
            <person name="Larimer F."/>
            <person name="Land M."/>
            <person name="Kyrpides N."/>
            <person name="Lykidis A."/>
            <person name="Moran M.A."/>
            <person name="Belas R."/>
            <person name="Ye W."/>
            <person name="Buchan A."/>
            <person name="Gonzalez J.M."/>
            <person name="Schell M.A."/>
            <person name="Richardson P."/>
        </authorList>
    </citation>
    <scope>NUCLEOTIDE SEQUENCE [LARGE SCALE GENOMIC DNA]</scope>
    <source>
        <strain>CCS1</strain>
    </source>
</reference>
<gene>
    <name evidence="1" type="primary">aspS</name>
    <name type="ordered locus">Jann_3166</name>
</gene>
<keyword id="KW-0030">Aminoacyl-tRNA synthetase</keyword>
<keyword id="KW-0067">ATP-binding</keyword>
<keyword id="KW-0963">Cytoplasm</keyword>
<keyword id="KW-0436">Ligase</keyword>
<keyword id="KW-0547">Nucleotide-binding</keyword>
<keyword id="KW-0648">Protein biosynthesis</keyword>
<keyword id="KW-1185">Reference proteome</keyword>
<protein>
    <recommendedName>
        <fullName evidence="1">Aspartate--tRNA(Asp/Asn) ligase</fullName>
        <ecNumber evidence="1">6.1.1.23</ecNumber>
    </recommendedName>
    <alternativeName>
        <fullName evidence="1">Aspartyl-tRNA synthetase</fullName>
        <shortName evidence="1">AspRS</shortName>
    </alternativeName>
    <alternativeName>
        <fullName evidence="1">Non-discriminating aspartyl-tRNA synthetase</fullName>
        <shortName evidence="1">ND-AspRS</shortName>
    </alternativeName>
</protein>
<organism>
    <name type="scientific">Jannaschia sp. (strain CCS1)</name>
    <dbReference type="NCBI Taxonomy" id="290400"/>
    <lineage>
        <taxon>Bacteria</taxon>
        <taxon>Pseudomonadati</taxon>
        <taxon>Pseudomonadota</taxon>
        <taxon>Alphaproteobacteria</taxon>
        <taxon>Rhodobacterales</taxon>
        <taxon>Roseobacteraceae</taxon>
        <taxon>Jannaschia</taxon>
    </lineage>
</organism>
<dbReference type="EC" id="6.1.1.23" evidence="1"/>
<dbReference type="EMBL" id="CP000264">
    <property type="protein sequence ID" value="ABD56083.1"/>
    <property type="molecule type" value="Genomic_DNA"/>
</dbReference>
<dbReference type="RefSeq" id="WP_011456287.1">
    <property type="nucleotide sequence ID" value="NC_007802.1"/>
</dbReference>
<dbReference type="SMR" id="Q28MH9"/>
<dbReference type="STRING" id="290400.Jann_3166"/>
<dbReference type="KEGG" id="jan:Jann_3166"/>
<dbReference type="eggNOG" id="COG0173">
    <property type="taxonomic scope" value="Bacteria"/>
</dbReference>
<dbReference type="HOGENOM" id="CLU_014330_3_2_5"/>
<dbReference type="OrthoDB" id="9802326at2"/>
<dbReference type="Proteomes" id="UP000008326">
    <property type="component" value="Chromosome"/>
</dbReference>
<dbReference type="GO" id="GO:0005737">
    <property type="term" value="C:cytoplasm"/>
    <property type="evidence" value="ECO:0007669"/>
    <property type="project" value="UniProtKB-SubCell"/>
</dbReference>
<dbReference type="GO" id="GO:0004815">
    <property type="term" value="F:aspartate-tRNA ligase activity"/>
    <property type="evidence" value="ECO:0007669"/>
    <property type="project" value="UniProtKB-UniRule"/>
</dbReference>
<dbReference type="GO" id="GO:0050560">
    <property type="term" value="F:aspartate-tRNA(Asn) ligase activity"/>
    <property type="evidence" value="ECO:0007669"/>
    <property type="project" value="UniProtKB-EC"/>
</dbReference>
<dbReference type="GO" id="GO:0005524">
    <property type="term" value="F:ATP binding"/>
    <property type="evidence" value="ECO:0007669"/>
    <property type="project" value="UniProtKB-UniRule"/>
</dbReference>
<dbReference type="GO" id="GO:0003676">
    <property type="term" value="F:nucleic acid binding"/>
    <property type="evidence" value="ECO:0007669"/>
    <property type="project" value="InterPro"/>
</dbReference>
<dbReference type="GO" id="GO:0006422">
    <property type="term" value="P:aspartyl-tRNA aminoacylation"/>
    <property type="evidence" value="ECO:0007669"/>
    <property type="project" value="UniProtKB-UniRule"/>
</dbReference>
<dbReference type="CDD" id="cd04317">
    <property type="entry name" value="EcAspRS_like_N"/>
    <property type="match status" value="1"/>
</dbReference>
<dbReference type="Gene3D" id="3.30.930.10">
    <property type="entry name" value="Bira Bifunctional Protein, Domain 2"/>
    <property type="match status" value="1"/>
</dbReference>
<dbReference type="Gene3D" id="3.30.1360.30">
    <property type="entry name" value="GAD-like domain"/>
    <property type="match status" value="1"/>
</dbReference>
<dbReference type="Gene3D" id="2.40.50.140">
    <property type="entry name" value="Nucleic acid-binding proteins"/>
    <property type="match status" value="1"/>
</dbReference>
<dbReference type="HAMAP" id="MF_00044">
    <property type="entry name" value="Asp_tRNA_synth_type1"/>
    <property type="match status" value="1"/>
</dbReference>
<dbReference type="InterPro" id="IPR004364">
    <property type="entry name" value="Aa-tRNA-synt_II"/>
</dbReference>
<dbReference type="InterPro" id="IPR006195">
    <property type="entry name" value="aa-tRNA-synth_II"/>
</dbReference>
<dbReference type="InterPro" id="IPR045864">
    <property type="entry name" value="aa-tRNA-synth_II/BPL/LPL"/>
</dbReference>
<dbReference type="InterPro" id="IPR004524">
    <property type="entry name" value="Asp-tRNA-ligase_1"/>
</dbReference>
<dbReference type="InterPro" id="IPR047089">
    <property type="entry name" value="Asp-tRNA-ligase_1_N"/>
</dbReference>
<dbReference type="InterPro" id="IPR002312">
    <property type="entry name" value="Asp/Asn-tRNA-synth_IIb"/>
</dbReference>
<dbReference type="InterPro" id="IPR004115">
    <property type="entry name" value="GAD-like_sf"/>
</dbReference>
<dbReference type="InterPro" id="IPR029351">
    <property type="entry name" value="GAD_dom"/>
</dbReference>
<dbReference type="InterPro" id="IPR012340">
    <property type="entry name" value="NA-bd_OB-fold"/>
</dbReference>
<dbReference type="InterPro" id="IPR004365">
    <property type="entry name" value="NA-bd_OB_tRNA"/>
</dbReference>
<dbReference type="NCBIfam" id="TIGR00459">
    <property type="entry name" value="aspS_bact"/>
    <property type="match status" value="1"/>
</dbReference>
<dbReference type="NCBIfam" id="NF001750">
    <property type="entry name" value="PRK00476.1"/>
    <property type="match status" value="1"/>
</dbReference>
<dbReference type="PANTHER" id="PTHR22594:SF5">
    <property type="entry name" value="ASPARTATE--TRNA LIGASE, MITOCHONDRIAL"/>
    <property type="match status" value="1"/>
</dbReference>
<dbReference type="PANTHER" id="PTHR22594">
    <property type="entry name" value="ASPARTYL/LYSYL-TRNA SYNTHETASE"/>
    <property type="match status" value="1"/>
</dbReference>
<dbReference type="Pfam" id="PF02938">
    <property type="entry name" value="GAD"/>
    <property type="match status" value="1"/>
</dbReference>
<dbReference type="Pfam" id="PF00152">
    <property type="entry name" value="tRNA-synt_2"/>
    <property type="match status" value="1"/>
</dbReference>
<dbReference type="Pfam" id="PF01336">
    <property type="entry name" value="tRNA_anti-codon"/>
    <property type="match status" value="1"/>
</dbReference>
<dbReference type="PRINTS" id="PR01042">
    <property type="entry name" value="TRNASYNTHASP"/>
</dbReference>
<dbReference type="SUPFAM" id="SSF55681">
    <property type="entry name" value="Class II aaRS and biotin synthetases"/>
    <property type="match status" value="1"/>
</dbReference>
<dbReference type="SUPFAM" id="SSF55261">
    <property type="entry name" value="GAD domain-like"/>
    <property type="match status" value="1"/>
</dbReference>
<dbReference type="SUPFAM" id="SSF50249">
    <property type="entry name" value="Nucleic acid-binding proteins"/>
    <property type="match status" value="1"/>
</dbReference>
<dbReference type="PROSITE" id="PS50862">
    <property type="entry name" value="AA_TRNA_LIGASE_II"/>
    <property type="match status" value="1"/>
</dbReference>
<comment type="function">
    <text evidence="1">Aspartyl-tRNA synthetase with relaxed tRNA specificity since it is able to aspartylate not only its cognate tRNA(Asp) but also tRNA(Asn). Reaction proceeds in two steps: L-aspartate is first activated by ATP to form Asp-AMP and then transferred to the acceptor end of tRNA(Asp/Asn).</text>
</comment>
<comment type="catalytic activity">
    <reaction evidence="1">
        <text>tRNA(Asx) + L-aspartate + ATP = L-aspartyl-tRNA(Asx) + AMP + diphosphate</text>
        <dbReference type="Rhea" id="RHEA:18349"/>
        <dbReference type="Rhea" id="RHEA-COMP:9710"/>
        <dbReference type="Rhea" id="RHEA-COMP:9711"/>
        <dbReference type="ChEBI" id="CHEBI:29991"/>
        <dbReference type="ChEBI" id="CHEBI:30616"/>
        <dbReference type="ChEBI" id="CHEBI:33019"/>
        <dbReference type="ChEBI" id="CHEBI:78442"/>
        <dbReference type="ChEBI" id="CHEBI:78516"/>
        <dbReference type="ChEBI" id="CHEBI:456215"/>
        <dbReference type="EC" id="6.1.1.23"/>
    </reaction>
</comment>
<comment type="subunit">
    <text evidence="1">Homodimer.</text>
</comment>
<comment type="subcellular location">
    <subcellularLocation>
        <location evidence="1">Cytoplasm</location>
    </subcellularLocation>
</comment>
<comment type="similarity">
    <text evidence="1">Belongs to the class-II aminoacyl-tRNA synthetase family. Type 1 subfamily.</text>
</comment>
<proteinExistence type="inferred from homology"/>
<evidence type="ECO:0000255" key="1">
    <source>
        <dbReference type="HAMAP-Rule" id="MF_00044"/>
    </source>
</evidence>
<sequence>MHAYRSHSCAALTAANVGETIRLSGWVHRRRDHGGVIFIDLRDHFGITQILCDPDSPVFAEVEKLRAEFCIRIDGEVKARAPELVNEKLPTGEIEVYIRDMEVLGAAGELPLQVFGDQEYPEETRLKYRYLDLRREKMQTNMMLRSDVVASIRKRMWDKQFREYQTPIITASSPEGARDFLVPSRQHPGKFYALPQAPQQFKQLLMVSGFDKYFQIAPCFRDEDPRADRSPTDFYQLDLEMSFVEQQDVFDTIEPVLRGVFEEFGDGATVDQQWPLISYADAALWYGTDKPDLRNPIKMQIVSEHFAGSGFAIFAKLLEQEGTQVRAIPAPKGGSRKFCDRMNKFAQEQGLPGMGYIFWRDQGEGMEAAGPLAKNIGPERTEAIRQQLDLGVGDAAFFLAGKPSQFEAVAGRARSVIGDELGLTEQNRFAFAWIVDFPMFEADEETGKIDFSHNPFSMPQGGLAALDGDPLSVLGYQYDLACNGYELVSGAIRNHQPEIMFKAFEVAGYGADEVRKRFGGMVNAFQYGAPPHGGCAAGIDRIVMLLADTANIREVILFPMNQRAEDLMMNAPSEPMPDQLMELGLRVLPQD</sequence>
<name>SYDND_JANSC</name>
<accession>Q28MH9</accession>
<feature type="chain" id="PRO_1000006688" description="Aspartate--tRNA(Asp/Asn) ligase">
    <location>
        <begin position="1"/>
        <end position="591"/>
    </location>
</feature>
<feature type="region of interest" description="Aspartate" evidence="1">
    <location>
        <begin position="199"/>
        <end position="202"/>
    </location>
</feature>
<feature type="binding site" evidence="1">
    <location>
        <position position="175"/>
    </location>
    <ligand>
        <name>L-aspartate</name>
        <dbReference type="ChEBI" id="CHEBI:29991"/>
    </ligand>
</feature>
<feature type="binding site" evidence="1">
    <location>
        <begin position="221"/>
        <end position="223"/>
    </location>
    <ligand>
        <name>ATP</name>
        <dbReference type="ChEBI" id="CHEBI:30616"/>
    </ligand>
</feature>
<feature type="binding site" evidence="1">
    <location>
        <position position="221"/>
    </location>
    <ligand>
        <name>L-aspartate</name>
        <dbReference type="ChEBI" id="CHEBI:29991"/>
    </ligand>
</feature>
<feature type="binding site" evidence="1">
    <location>
        <position position="453"/>
    </location>
    <ligand>
        <name>L-aspartate</name>
        <dbReference type="ChEBI" id="CHEBI:29991"/>
    </ligand>
</feature>
<feature type="binding site" evidence="1">
    <location>
        <position position="486"/>
    </location>
    <ligand>
        <name>ATP</name>
        <dbReference type="ChEBI" id="CHEBI:30616"/>
    </ligand>
</feature>
<feature type="binding site" evidence="1">
    <location>
        <position position="493"/>
    </location>
    <ligand>
        <name>L-aspartate</name>
        <dbReference type="ChEBI" id="CHEBI:29991"/>
    </ligand>
</feature>
<feature type="binding site" evidence="1">
    <location>
        <begin position="538"/>
        <end position="541"/>
    </location>
    <ligand>
        <name>ATP</name>
        <dbReference type="ChEBI" id="CHEBI:30616"/>
    </ligand>
</feature>
<feature type="site" description="Important for tRNA non-discrimination" evidence="1">
    <location>
        <position position="33"/>
    </location>
</feature>